<gene>
    <name evidence="1" type="primary">ruvA</name>
    <name type="ordered locus">GM21_0931</name>
</gene>
<dbReference type="EMBL" id="CP001661">
    <property type="protein sequence ID" value="ACT16998.1"/>
    <property type="molecule type" value="Genomic_DNA"/>
</dbReference>
<dbReference type="SMR" id="C6E1S9"/>
<dbReference type="STRING" id="443144.GM21_0931"/>
<dbReference type="KEGG" id="gem:GM21_0931"/>
<dbReference type="eggNOG" id="COG0632">
    <property type="taxonomic scope" value="Bacteria"/>
</dbReference>
<dbReference type="HOGENOM" id="CLU_087936_0_0_7"/>
<dbReference type="OrthoDB" id="5293449at2"/>
<dbReference type="GO" id="GO:0005737">
    <property type="term" value="C:cytoplasm"/>
    <property type="evidence" value="ECO:0007669"/>
    <property type="project" value="UniProtKB-SubCell"/>
</dbReference>
<dbReference type="GO" id="GO:0009379">
    <property type="term" value="C:Holliday junction helicase complex"/>
    <property type="evidence" value="ECO:0007669"/>
    <property type="project" value="InterPro"/>
</dbReference>
<dbReference type="GO" id="GO:0048476">
    <property type="term" value="C:Holliday junction resolvase complex"/>
    <property type="evidence" value="ECO:0007669"/>
    <property type="project" value="UniProtKB-UniRule"/>
</dbReference>
<dbReference type="GO" id="GO:0005524">
    <property type="term" value="F:ATP binding"/>
    <property type="evidence" value="ECO:0007669"/>
    <property type="project" value="InterPro"/>
</dbReference>
<dbReference type="GO" id="GO:0000400">
    <property type="term" value="F:four-way junction DNA binding"/>
    <property type="evidence" value="ECO:0007669"/>
    <property type="project" value="UniProtKB-UniRule"/>
</dbReference>
<dbReference type="GO" id="GO:0009378">
    <property type="term" value="F:four-way junction helicase activity"/>
    <property type="evidence" value="ECO:0007669"/>
    <property type="project" value="InterPro"/>
</dbReference>
<dbReference type="GO" id="GO:0006310">
    <property type="term" value="P:DNA recombination"/>
    <property type="evidence" value="ECO:0007669"/>
    <property type="project" value="UniProtKB-UniRule"/>
</dbReference>
<dbReference type="GO" id="GO:0006281">
    <property type="term" value="P:DNA repair"/>
    <property type="evidence" value="ECO:0007669"/>
    <property type="project" value="UniProtKB-UniRule"/>
</dbReference>
<dbReference type="CDD" id="cd14332">
    <property type="entry name" value="UBA_RuvA_C"/>
    <property type="match status" value="1"/>
</dbReference>
<dbReference type="Gene3D" id="1.10.150.20">
    <property type="entry name" value="5' to 3' exonuclease, C-terminal subdomain"/>
    <property type="match status" value="1"/>
</dbReference>
<dbReference type="Gene3D" id="1.10.8.10">
    <property type="entry name" value="DNA helicase RuvA subunit, C-terminal domain"/>
    <property type="match status" value="1"/>
</dbReference>
<dbReference type="Gene3D" id="2.40.50.140">
    <property type="entry name" value="Nucleic acid-binding proteins"/>
    <property type="match status" value="1"/>
</dbReference>
<dbReference type="HAMAP" id="MF_00031">
    <property type="entry name" value="DNA_HJ_migration_RuvA"/>
    <property type="match status" value="1"/>
</dbReference>
<dbReference type="InterPro" id="IPR013849">
    <property type="entry name" value="DNA_helicase_Holl-junc_RuvA_I"/>
</dbReference>
<dbReference type="InterPro" id="IPR003583">
    <property type="entry name" value="Hlx-hairpin-Hlx_DNA-bd_motif"/>
</dbReference>
<dbReference type="InterPro" id="IPR012340">
    <property type="entry name" value="NA-bd_OB-fold"/>
</dbReference>
<dbReference type="InterPro" id="IPR000085">
    <property type="entry name" value="RuvA"/>
</dbReference>
<dbReference type="InterPro" id="IPR010994">
    <property type="entry name" value="RuvA_2-like"/>
</dbReference>
<dbReference type="InterPro" id="IPR011114">
    <property type="entry name" value="RuvA_C"/>
</dbReference>
<dbReference type="InterPro" id="IPR036267">
    <property type="entry name" value="RuvA_C_sf"/>
</dbReference>
<dbReference type="NCBIfam" id="TIGR00084">
    <property type="entry name" value="ruvA"/>
    <property type="match status" value="1"/>
</dbReference>
<dbReference type="Pfam" id="PF14520">
    <property type="entry name" value="HHH_5"/>
    <property type="match status" value="1"/>
</dbReference>
<dbReference type="Pfam" id="PF07499">
    <property type="entry name" value="RuvA_C"/>
    <property type="match status" value="1"/>
</dbReference>
<dbReference type="Pfam" id="PF01330">
    <property type="entry name" value="RuvA_N"/>
    <property type="match status" value="1"/>
</dbReference>
<dbReference type="SMART" id="SM00278">
    <property type="entry name" value="HhH1"/>
    <property type="match status" value="2"/>
</dbReference>
<dbReference type="SUPFAM" id="SSF46929">
    <property type="entry name" value="DNA helicase RuvA subunit, C-terminal domain"/>
    <property type="match status" value="1"/>
</dbReference>
<dbReference type="SUPFAM" id="SSF50249">
    <property type="entry name" value="Nucleic acid-binding proteins"/>
    <property type="match status" value="1"/>
</dbReference>
<dbReference type="SUPFAM" id="SSF47781">
    <property type="entry name" value="RuvA domain 2-like"/>
    <property type="match status" value="1"/>
</dbReference>
<proteinExistence type="inferred from homology"/>
<sequence>MIALLTGKLAYKSPEFIILDVNGVGYQVHIPFSTYYTLPAEGGALSLQIHTSVKEDAINLYGFRTQQEKELFQLLIGVSGVGPKLATGILSNSEPSELADSLVNGNLARLSAIPGIGKKTAERLVLELKEKMKKLGLAQPQAGGATAPAKQEIRDDVLSALINLGYKEAVVQKALAELKVTEDATVELVLKQALKILMK</sequence>
<organism>
    <name type="scientific">Geobacter sp. (strain M21)</name>
    <dbReference type="NCBI Taxonomy" id="443144"/>
    <lineage>
        <taxon>Bacteria</taxon>
        <taxon>Pseudomonadati</taxon>
        <taxon>Thermodesulfobacteriota</taxon>
        <taxon>Desulfuromonadia</taxon>
        <taxon>Geobacterales</taxon>
        <taxon>Geobacteraceae</taxon>
        <taxon>Geobacter</taxon>
    </lineage>
</organism>
<reference key="1">
    <citation type="submission" date="2009-07" db="EMBL/GenBank/DDBJ databases">
        <title>Complete sequence of Geobacter sp. M21.</title>
        <authorList>
            <consortium name="US DOE Joint Genome Institute"/>
            <person name="Lucas S."/>
            <person name="Copeland A."/>
            <person name="Lapidus A."/>
            <person name="Glavina del Rio T."/>
            <person name="Dalin E."/>
            <person name="Tice H."/>
            <person name="Bruce D."/>
            <person name="Goodwin L."/>
            <person name="Pitluck S."/>
            <person name="Saunders E."/>
            <person name="Brettin T."/>
            <person name="Detter J.C."/>
            <person name="Han C."/>
            <person name="Larimer F."/>
            <person name="Land M."/>
            <person name="Hauser L."/>
            <person name="Kyrpides N."/>
            <person name="Ovchinnikova G."/>
            <person name="Lovley D."/>
        </authorList>
    </citation>
    <scope>NUCLEOTIDE SEQUENCE [LARGE SCALE GENOMIC DNA]</scope>
    <source>
        <strain>M21</strain>
    </source>
</reference>
<feature type="chain" id="PRO_1000201992" description="Holliday junction branch migration complex subunit RuvA">
    <location>
        <begin position="1"/>
        <end position="199"/>
    </location>
</feature>
<feature type="region of interest" description="Domain I" evidence="1">
    <location>
        <begin position="1"/>
        <end position="64"/>
    </location>
</feature>
<feature type="region of interest" description="Domain II" evidence="1">
    <location>
        <begin position="65"/>
        <end position="143"/>
    </location>
</feature>
<feature type="region of interest" description="Flexible linker" evidence="1">
    <location>
        <begin position="144"/>
        <end position="148"/>
    </location>
</feature>
<feature type="region of interest" description="Domain III" evidence="1">
    <location>
        <begin position="149"/>
        <end position="199"/>
    </location>
</feature>
<evidence type="ECO:0000255" key="1">
    <source>
        <dbReference type="HAMAP-Rule" id="MF_00031"/>
    </source>
</evidence>
<keyword id="KW-0963">Cytoplasm</keyword>
<keyword id="KW-0227">DNA damage</keyword>
<keyword id="KW-0233">DNA recombination</keyword>
<keyword id="KW-0234">DNA repair</keyword>
<keyword id="KW-0238">DNA-binding</keyword>
<name>RUVA_GEOSM</name>
<protein>
    <recommendedName>
        <fullName evidence="1">Holliday junction branch migration complex subunit RuvA</fullName>
    </recommendedName>
</protein>
<accession>C6E1S9</accession>
<comment type="function">
    <text evidence="1">The RuvA-RuvB-RuvC complex processes Holliday junction (HJ) DNA during genetic recombination and DNA repair, while the RuvA-RuvB complex plays an important role in the rescue of blocked DNA replication forks via replication fork reversal (RFR). RuvA specifically binds to HJ cruciform DNA, conferring on it an open structure. The RuvB hexamer acts as an ATP-dependent pump, pulling dsDNA into and through the RuvAB complex. HJ branch migration allows RuvC to scan DNA until it finds its consensus sequence, where it cleaves and resolves the cruciform DNA.</text>
</comment>
<comment type="subunit">
    <text evidence="1">Homotetramer. Forms an RuvA(8)-RuvB(12)-Holliday junction (HJ) complex. HJ DNA is sandwiched between 2 RuvA tetramers; dsDNA enters through RuvA and exits via RuvB. An RuvB hexamer assembles on each DNA strand where it exits the tetramer. Each RuvB hexamer is contacted by two RuvA subunits (via domain III) on 2 adjacent RuvB subunits; this complex drives branch migration. In the full resolvosome a probable DNA-RuvA(4)-RuvB(12)-RuvC(2) complex forms which resolves the HJ.</text>
</comment>
<comment type="subcellular location">
    <subcellularLocation>
        <location evidence="1">Cytoplasm</location>
    </subcellularLocation>
</comment>
<comment type="domain">
    <text evidence="1">Has three domains with a flexible linker between the domains II and III and assumes an 'L' shape. Domain III is highly mobile and contacts RuvB.</text>
</comment>
<comment type="similarity">
    <text evidence="1">Belongs to the RuvA family.</text>
</comment>